<evidence type="ECO:0000255" key="1">
    <source>
        <dbReference type="HAMAP-Rule" id="MF_00591"/>
    </source>
</evidence>
<sequence length="243" mass="27101">MIQLQKPRLILDNGLRLDGRKPDEMRPIKIELGVLKNADGSAIFEMGNTKVIAAVYGPKEMHPRHLALPDRAVLRVRYHMTPFSTDERKNPAPSRREIELSKVIREALESTILVELFPRTVIDVFMEVLQADAGTRLVSLMAASMALADAGIPMRDLIAGVAVGKADGVLVLDLNEPEDMWGEADMPVAMMPSLKQVALLQLNGNMTPQEFRQALEMAQKGIETIYNLEKEAIRSKYAELKEE</sequence>
<organism>
    <name type="scientific">Sulfurisphaera tokodaii (strain DSM 16993 / JCM 10545 / NBRC 100140 / 7)</name>
    <name type="common">Sulfolobus tokodaii</name>
    <dbReference type="NCBI Taxonomy" id="273063"/>
    <lineage>
        <taxon>Archaea</taxon>
        <taxon>Thermoproteota</taxon>
        <taxon>Thermoprotei</taxon>
        <taxon>Sulfolobales</taxon>
        <taxon>Sulfolobaceae</taxon>
        <taxon>Sulfurisphaera</taxon>
    </lineage>
</organism>
<gene>
    <name evidence="1" type="primary">rrp41</name>
    <name type="ordered locus">STK_04430</name>
</gene>
<reference key="1">
    <citation type="journal article" date="2001" name="DNA Res.">
        <title>Complete genome sequence of an aerobic thermoacidophilic Crenarchaeon, Sulfolobus tokodaii strain7.</title>
        <authorList>
            <person name="Kawarabayasi Y."/>
            <person name="Hino Y."/>
            <person name="Horikawa H."/>
            <person name="Jin-no K."/>
            <person name="Takahashi M."/>
            <person name="Sekine M."/>
            <person name="Baba S."/>
            <person name="Ankai A."/>
            <person name="Kosugi H."/>
            <person name="Hosoyama A."/>
            <person name="Fukui S."/>
            <person name="Nagai Y."/>
            <person name="Nishijima K."/>
            <person name="Otsuka R."/>
            <person name="Nakazawa H."/>
            <person name="Takamiya M."/>
            <person name="Kato Y."/>
            <person name="Yoshizawa T."/>
            <person name="Tanaka T."/>
            <person name="Kudoh Y."/>
            <person name="Yamazaki J."/>
            <person name="Kushida N."/>
            <person name="Oguchi A."/>
            <person name="Aoki K."/>
            <person name="Masuda S."/>
            <person name="Yanagii M."/>
            <person name="Nishimura M."/>
            <person name="Yamagishi A."/>
            <person name="Oshima T."/>
            <person name="Kikuchi H."/>
        </authorList>
    </citation>
    <scope>NUCLEOTIDE SEQUENCE [LARGE SCALE GENOMIC DNA]</scope>
    <source>
        <strain>DSM 16993 / JCM 10545 / NBRC 100140 / 7</strain>
    </source>
</reference>
<feature type="chain" id="PRO_0000139992" description="Exosome complex component Rrp41">
    <location>
        <begin position="1"/>
        <end position="243"/>
    </location>
</feature>
<name>RRP41_SULTO</name>
<accession>Q975G8</accession>
<accession>F9VMZ0</accession>
<comment type="function">
    <text evidence="1">Catalytic component of the exosome, which is a complex involved in RNA degradation. Has 3'-&gt;5' exoribonuclease activity. Can also synthesize heteromeric RNA-tails.</text>
</comment>
<comment type="subunit">
    <text evidence="1">Component of the archaeal exosome complex. Forms a hexameric ring-like arrangement composed of 3 Rrp41-Rrp42 heterodimers. The hexameric ring associates with a trimer of Rrp4 and/or Csl4 subunits.</text>
</comment>
<comment type="subcellular location">
    <subcellularLocation>
        <location evidence="1">Cytoplasm</location>
    </subcellularLocation>
</comment>
<comment type="similarity">
    <text evidence="1">Belongs to the RNase PH family. Rrp41 subfamily.</text>
</comment>
<protein>
    <recommendedName>
        <fullName evidence="1">Exosome complex component Rrp41</fullName>
        <ecNumber evidence="1">3.1.13.-</ecNumber>
    </recommendedName>
</protein>
<proteinExistence type="inferred from homology"/>
<dbReference type="EC" id="3.1.13.-" evidence="1"/>
<dbReference type="EMBL" id="BA000023">
    <property type="protein sequence ID" value="BAK54287.1"/>
    <property type="molecule type" value="Genomic_DNA"/>
</dbReference>
<dbReference type="RefSeq" id="WP_052846320.1">
    <property type="nucleotide sequence ID" value="NC_003106.2"/>
</dbReference>
<dbReference type="SMR" id="Q975G8"/>
<dbReference type="STRING" id="273063.STK_04430"/>
<dbReference type="GeneID" id="1458380"/>
<dbReference type="KEGG" id="sto:STK_04430"/>
<dbReference type="PATRIC" id="fig|273063.9.peg.515"/>
<dbReference type="eggNOG" id="arCOG01575">
    <property type="taxonomic scope" value="Archaea"/>
</dbReference>
<dbReference type="OrthoDB" id="24266at2157"/>
<dbReference type="Proteomes" id="UP000001015">
    <property type="component" value="Chromosome"/>
</dbReference>
<dbReference type="GO" id="GO:0000177">
    <property type="term" value="C:cytoplasmic exosome (RNase complex)"/>
    <property type="evidence" value="ECO:0007669"/>
    <property type="project" value="TreeGrafter"/>
</dbReference>
<dbReference type="GO" id="GO:0000175">
    <property type="term" value="F:3'-5'-RNA exonuclease activity"/>
    <property type="evidence" value="ECO:0007669"/>
    <property type="project" value="UniProtKB-UniRule"/>
</dbReference>
<dbReference type="GO" id="GO:0003723">
    <property type="term" value="F:RNA binding"/>
    <property type="evidence" value="ECO:0007669"/>
    <property type="project" value="TreeGrafter"/>
</dbReference>
<dbReference type="GO" id="GO:0010467">
    <property type="term" value="P:gene expression"/>
    <property type="evidence" value="ECO:0007669"/>
    <property type="project" value="UniProtKB-ARBA"/>
</dbReference>
<dbReference type="GO" id="GO:0016075">
    <property type="term" value="P:rRNA catabolic process"/>
    <property type="evidence" value="ECO:0007669"/>
    <property type="project" value="TreeGrafter"/>
</dbReference>
<dbReference type="CDD" id="cd11366">
    <property type="entry name" value="RNase_PH_archRRP41"/>
    <property type="match status" value="1"/>
</dbReference>
<dbReference type="FunFam" id="3.30.230.70:FF:000004">
    <property type="entry name" value="Exosome complex component Rrp41"/>
    <property type="match status" value="1"/>
</dbReference>
<dbReference type="Gene3D" id="3.30.230.70">
    <property type="entry name" value="GHMP Kinase, N-terminal domain"/>
    <property type="match status" value="1"/>
</dbReference>
<dbReference type="HAMAP" id="MF_00591">
    <property type="entry name" value="Exosome_Rrp41"/>
    <property type="match status" value="1"/>
</dbReference>
<dbReference type="InterPro" id="IPR001247">
    <property type="entry name" value="ExoRNase_PH_dom1"/>
</dbReference>
<dbReference type="InterPro" id="IPR015847">
    <property type="entry name" value="ExoRNase_PH_dom2"/>
</dbReference>
<dbReference type="InterPro" id="IPR036345">
    <property type="entry name" value="ExoRNase_PH_dom2_sf"/>
</dbReference>
<dbReference type="InterPro" id="IPR027408">
    <property type="entry name" value="PNPase/RNase_PH_dom_sf"/>
</dbReference>
<dbReference type="InterPro" id="IPR020568">
    <property type="entry name" value="Ribosomal_Su5_D2-typ_SF"/>
</dbReference>
<dbReference type="InterPro" id="IPR050080">
    <property type="entry name" value="RNase_PH"/>
</dbReference>
<dbReference type="InterPro" id="IPR011807">
    <property type="entry name" value="Rrp41"/>
</dbReference>
<dbReference type="NCBIfam" id="TIGR02065">
    <property type="entry name" value="ECX1"/>
    <property type="match status" value="1"/>
</dbReference>
<dbReference type="PANTHER" id="PTHR11953">
    <property type="entry name" value="EXOSOME COMPLEX COMPONENT"/>
    <property type="match status" value="1"/>
</dbReference>
<dbReference type="PANTHER" id="PTHR11953:SF0">
    <property type="entry name" value="EXOSOME COMPLEX COMPONENT RRP41"/>
    <property type="match status" value="1"/>
</dbReference>
<dbReference type="Pfam" id="PF01138">
    <property type="entry name" value="RNase_PH"/>
    <property type="match status" value="1"/>
</dbReference>
<dbReference type="Pfam" id="PF03725">
    <property type="entry name" value="RNase_PH_C"/>
    <property type="match status" value="1"/>
</dbReference>
<dbReference type="SUPFAM" id="SSF55666">
    <property type="entry name" value="Ribonuclease PH domain 2-like"/>
    <property type="match status" value="1"/>
</dbReference>
<dbReference type="SUPFAM" id="SSF54211">
    <property type="entry name" value="Ribosomal protein S5 domain 2-like"/>
    <property type="match status" value="1"/>
</dbReference>
<keyword id="KW-0963">Cytoplasm</keyword>
<keyword id="KW-0269">Exonuclease</keyword>
<keyword id="KW-0271">Exosome</keyword>
<keyword id="KW-0378">Hydrolase</keyword>
<keyword id="KW-0540">Nuclease</keyword>
<keyword id="KW-1185">Reference proteome</keyword>